<evidence type="ECO:0000250" key="1"/>
<evidence type="ECO:0000269" key="2">
    <source>
    </source>
</evidence>
<evidence type="ECO:0000305" key="3"/>
<gene>
    <name type="primary">prdA</name>
    <name type="ordered locus">CLOST_2234</name>
</gene>
<protein>
    <recommendedName>
        <fullName>D-proline reductase proprotein PrdA</fullName>
        <ecNumber evidence="2">1.21.4.1</ecNumber>
    </recommendedName>
    <component>
        <recommendedName>
            <fullName>D-proline reductase subunit beta</fullName>
        </recommendedName>
        <alternativeName>
            <fullName>D-proline reductase 45 kDa subunit</fullName>
        </alternativeName>
    </component>
    <component>
        <recommendedName>
            <fullName>D-proline reductase subunit alpha</fullName>
        </recommendedName>
        <alternativeName>
            <fullName>D-proline reductase 23 kDa subunit</fullName>
        </alternativeName>
    </component>
</protein>
<keyword id="KW-0963">Cytoplasm</keyword>
<keyword id="KW-0903">Direct protein sequencing</keyword>
<keyword id="KW-0560">Oxidoreductase</keyword>
<keyword id="KW-0670">Pyruvate</keyword>
<keyword id="KW-1185">Reference proteome</keyword>
<feature type="chain" id="PRO_0000240010" description="D-proline reductase subunit beta">
    <location>
        <begin position="1"/>
        <end position="424"/>
    </location>
</feature>
<feature type="chain" id="PRO_0000240011" description="D-proline reductase subunit alpha">
    <location>
        <begin position="425"/>
        <end position="629"/>
    </location>
</feature>
<feature type="active site" description="Covalent intermediate with substrate; via pyruvic acid" evidence="3">
    <location>
        <position position="425"/>
    </location>
</feature>
<feature type="modified residue" description="Pyruvic acid (Cys)" evidence="3">
    <location>
        <position position="425"/>
    </location>
</feature>
<feature type="sequence conflict" description="In Ref. 1; CAB38126." evidence="3" ref="1">
    <original>KIE</original>
    <variation>QNLR</variation>
    <location>
        <begin position="186"/>
        <end position="188"/>
    </location>
</feature>
<feature type="sequence conflict" description="In Ref. 1; CAB38126." evidence="3" ref="1">
    <original>N</original>
    <variation>S</variation>
    <location>
        <position position="587"/>
    </location>
</feature>
<feature type="sequence conflict" description="In Ref. 1; CAB38126." evidence="3" ref="1">
    <original>KR</original>
    <variation>RE</variation>
    <location>
        <begin position="620"/>
        <end position="621"/>
    </location>
</feature>
<proteinExistence type="evidence at protein level"/>
<sequence length="629" mass="67598">MSITLESAKEHANDLAVLCCRAEEGTVIGPSNLEDPAIFGDLEDSGLLTIPANCLKIGEVLGAKLVKTADSLTPLTPELLEGVNSISEEAPKQEASAPVEAPVAEVAPAAMPVANVTGSMLKIHIGEGKDINLEIPLTIAGQMGVVAPTAAAPAGVAMPVASATEQVVAPAGEPKLVRTLQKKHFKIEKVEFGPETKIENNTIYIRENICEDAVKVSNLVTDIKVEIITPADYGKYSETIMDVQPIATKEGDGKIGQGVTRVIDGAIIMVTGTDEDGVQIGEFGSSEGELDANIMWGRPGAPDKGEILIKTQVTIKAGTNMERPGPLAAHKATDFITQEIREALKKLDDSEVVETEELAQYRRPGKKKVVIIKEIMGQGAMHDNLILPVEPVGVIGAKPNVDLGNVPVVLSPLEVLDGGIHALTCIGPASKENSRHYWREPLVIEVMNDEEFDLAGVVFVGSPQVNAEKFYVSERLGMLVETMDVEGAFITTEGFGNNHIDFASHHEQVGMRGIPVVGMSFCAVQGALVVGNKYMKYMVDNNKSEQGIENEILSNNTLCPEDAIRAVAMLKAAIAEEEVKVAERKFNKNVKENNVDLIEEQAGKEITLLPNEQVLPMSKKRKEIYEADK</sequence>
<organism>
    <name type="scientific">Acetoanaerobium sticklandii (strain ATCC 12662 / DSM 519 / JCM 1433 / CCUG 9281 / NCIMB 10654 / HF)</name>
    <name type="common">Clostridium sticklandii</name>
    <dbReference type="NCBI Taxonomy" id="499177"/>
    <lineage>
        <taxon>Bacteria</taxon>
        <taxon>Bacillati</taxon>
        <taxon>Bacillota</taxon>
        <taxon>Clostridia</taxon>
        <taxon>Peptostreptococcales</taxon>
        <taxon>Filifactoraceae</taxon>
        <taxon>Acetoanaerobium</taxon>
    </lineage>
</organism>
<accession>Q9Z4P6</accession>
<accession>E3PTZ9</accession>
<dbReference type="EC" id="1.21.4.1" evidence="2"/>
<dbReference type="EMBL" id="AJ130879">
    <property type="protein sequence ID" value="CAB38126.1"/>
    <property type="molecule type" value="Genomic_DNA"/>
</dbReference>
<dbReference type="EMBL" id="FP565809">
    <property type="protein sequence ID" value="CBH22353.1"/>
    <property type="molecule type" value="Genomic_DNA"/>
</dbReference>
<dbReference type="STRING" id="1511.CLOST_2234"/>
<dbReference type="KEGG" id="cst:CLOST_2234"/>
<dbReference type="eggNOG" id="COG0252">
    <property type="taxonomic scope" value="Bacteria"/>
</dbReference>
<dbReference type="eggNOG" id="COG5275">
    <property type="taxonomic scope" value="Bacteria"/>
</dbReference>
<dbReference type="HOGENOM" id="CLU_469055_0_0_9"/>
<dbReference type="BioCyc" id="MetaCyc:PRDAST-MONOMER"/>
<dbReference type="Proteomes" id="UP000007041">
    <property type="component" value="Chromosome"/>
</dbReference>
<dbReference type="GO" id="GO:0005737">
    <property type="term" value="C:cytoplasm"/>
    <property type="evidence" value="ECO:0007669"/>
    <property type="project" value="UniProtKB-SubCell"/>
</dbReference>
<dbReference type="GO" id="GO:0050002">
    <property type="term" value="F:D-proline reductase activity"/>
    <property type="evidence" value="ECO:0000314"/>
    <property type="project" value="CACAO"/>
</dbReference>
<dbReference type="InterPro" id="IPR031002">
    <property type="entry name" value="D_pro_red_PrdA"/>
</dbReference>
<dbReference type="InterPro" id="IPR015417">
    <property type="entry name" value="Gly_reductase_pB_sua/b"/>
</dbReference>
<dbReference type="NCBIfam" id="TIGR04480">
    <property type="entry name" value="D_pro_red_PrdA"/>
    <property type="match status" value="1"/>
</dbReference>
<dbReference type="Pfam" id="PF09338">
    <property type="entry name" value="Gly_reductase"/>
    <property type="match status" value="1"/>
</dbReference>
<reference key="1">
    <citation type="journal article" date="1999" name="J. Biol. Chem.">
        <title>Identification of D-proline reductase from Clostridium sticklandii as a selenoenzyme and indications for a catalytically active pyruvoyl group derived from a cysteine residue by cleavage of a proprotein.</title>
        <authorList>
            <person name="Kabisch U.C."/>
            <person name="Graentzdoerffer A."/>
            <person name="Schierhorn A."/>
            <person name="Ruecknagel K.P."/>
            <person name="Andreesen J.R."/>
            <person name="Pich A."/>
        </authorList>
    </citation>
    <scope>NUCLEOTIDE SEQUENCE [GENOMIC DNA]</scope>
    <scope>PROTEIN SEQUENCE OF 1-18; 190-224; 255-303; 399-424; 426-455; 470-490; 544-563; 572-580 AND 592-604</scope>
    <scope>SUBUNIT</scope>
    <scope>SUBCELLULAR LOCATION</scope>
    <scope>FUNCTION</scope>
    <scope>CATALYTIC ACTIVITY</scope>
    <scope>CHARACTERIZATION</scope>
    <source>
        <strain>ATCC 12662 / DSM 519 / JCM 1433 / CCUG 9281 / NCIMB 10654 / HF</strain>
    </source>
</reference>
<reference key="2">
    <citation type="journal article" date="2010" name="BMC Genomics">
        <title>Clostridium sticklandii, a specialist in amino acid degradation:revisiting its metabolism through its genome sequence.</title>
        <authorList>
            <person name="Fonknechten N."/>
            <person name="Chaussonnerie S."/>
            <person name="Tricot S."/>
            <person name="Lajus A."/>
            <person name="Andreesen J.R."/>
            <person name="Perchat N."/>
            <person name="Pelletier E."/>
            <person name="Gouyvenoux M."/>
            <person name="Barbe V."/>
            <person name="Salanoubat M."/>
            <person name="Le Paslier D."/>
            <person name="Weissenbach J."/>
            <person name="Cohen G.N."/>
            <person name="Kreimeyer A."/>
        </authorList>
    </citation>
    <scope>NUCLEOTIDE SEQUENCE [LARGE SCALE GENOMIC DNA]</scope>
    <source>
        <strain>ATCC 12662 / DSM 519 / JCM 1433 / CCUG 9281 / NCIMB 10654 / HF</strain>
    </source>
</reference>
<reference key="3">
    <citation type="journal article" date="2001" name="Eur. J. Biochem.">
        <title>In vitro processing of the proproteins grdE of protein B of glycine reductase and prdA of D-proline reductase from Clostridium sticklandii: formation of a pyruvoyl group from a cysteine residue.</title>
        <authorList>
            <person name="Bednarski B."/>
            <person name="Andreesen J.R."/>
            <person name="Pich A."/>
        </authorList>
    </citation>
    <scope>PROTEOLYTIC PROCESSING IN VITRO</scope>
    <source>
        <strain>ATCC 12662 / DSM 519 / JCM 1433 / CCUG 9281 / NCIMB 10654 / HF</strain>
    </source>
</reference>
<name>PRDA_ACESD</name>
<comment type="function">
    <text evidence="2">D-proline reductase catalyzes the reductive cleavage of a C-N bond in D-proline resulting in the formation of 5-aminovalerate. The alpha subunit has been shown to bind D-proline, presumably via the pyruvoyl group.</text>
</comment>
<comment type="catalytic activity">
    <reaction evidence="2">
        <text>[PrdC protein]-Se-L-selenocysteinyl-S-L-cysteine + 5-aminopentanoate = [PrdC protein]-L-selenocysteine/L-cysteine + D-proline</text>
        <dbReference type="Rhea" id="RHEA:12737"/>
        <dbReference type="Rhea" id="RHEA-COMP:14983"/>
        <dbReference type="Rhea" id="RHEA-COMP:14984"/>
        <dbReference type="ChEBI" id="CHEBI:29950"/>
        <dbReference type="ChEBI" id="CHEBI:30000"/>
        <dbReference type="ChEBI" id="CHEBI:57726"/>
        <dbReference type="ChEBI" id="CHEBI:142235"/>
        <dbReference type="ChEBI" id="CHEBI:356010"/>
        <dbReference type="EC" id="1.21.4.1"/>
    </reaction>
</comment>
<comment type="subunit">
    <text evidence="2">Consists of 3 subunits of 23, 26 and 45 kDa (alpha, gamma and beta respectively). The molecular weight of the complex is approximately 870 kDa, suggesting a decameric structure, if all 3 subunits are present in equal stoichiometry.</text>
</comment>
<comment type="subcellular location">
    <subcellularLocation>
        <location evidence="2">Cytoplasm</location>
    </subcellularLocation>
</comment>
<comment type="PTM">
    <text evidence="1">The peptide chain is cleaved into beta and alpha chains, and the alpha chain N-terminal cysteine is deaminated and oxidized to form a reactive pyruvoyl group.</text>
</comment>
<comment type="miscellaneous">
    <text>The reaction mechanism first involves the formation of an adduct (and not a Schiff base) between the nitrogen of proline and the pyruvoyl group of the alpha subunit. The selenol anion of selenocysteine in PrdB nucleophilically attacks the alpha-carbon, resulting in cleavage of the N-C bond of the proline ring. This intermediate is then transformed to the oxidized gamma subunit containing a mixed selenide/sulfide group and to the 5-aminovalerate adduct of the alpha subunit. The final product, 5-aminovalerate, is formed by hydrolysis. Subsequently, the selenide-sulfide group of PrdB is reduced, but the natural electron donating system for D-proline reductase is unknown.</text>
</comment>